<evidence type="ECO:0000250" key="1">
    <source>
        <dbReference type="UniProtKB" id="P81782"/>
    </source>
</evidence>
<evidence type="ECO:0000269" key="2">
    <source>
    </source>
</evidence>
<evidence type="ECO:0000303" key="3">
    <source>
    </source>
</evidence>
<evidence type="ECO:0000305" key="4"/>
<evidence type="ECO:0000305" key="5">
    <source>
    </source>
</evidence>
<name>3NOJ_WALAE</name>
<sequence>MECYKCGVSGCHLKITCSAEEKFCYKWRDKISNERWLGCAKTCTEENTWRVYNSCCTTNLCNP</sequence>
<organism>
    <name type="scientific">Walterinnesia aegyptia</name>
    <name type="common">Desert black snake</name>
    <dbReference type="NCBI Taxonomy" id="64182"/>
    <lineage>
        <taxon>Eukaryota</taxon>
        <taxon>Metazoa</taxon>
        <taxon>Chordata</taxon>
        <taxon>Craniata</taxon>
        <taxon>Vertebrata</taxon>
        <taxon>Euteleostomi</taxon>
        <taxon>Lepidosauria</taxon>
        <taxon>Squamata</taxon>
        <taxon>Bifurcata</taxon>
        <taxon>Unidentata</taxon>
        <taxon>Episquamata</taxon>
        <taxon>Toxicofera</taxon>
        <taxon>Serpentes</taxon>
        <taxon>Colubroidea</taxon>
        <taxon>Elapidae</taxon>
        <taxon>Elapinae</taxon>
        <taxon>Walterinnesia</taxon>
    </lineage>
</organism>
<accession>C0HKZ8</accession>
<keyword id="KW-0027">Amidation</keyword>
<keyword id="KW-0903">Direct protein sequencing</keyword>
<keyword id="KW-1015">Disulfide bond</keyword>
<keyword id="KW-0528">Neurotoxin</keyword>
<keyword id="KW-0638">Presynaptic neurotoxin</keyword>
<keyword id="KW-0964">Secreted</keyword>
<keyword id="KW-0800">Toxin</keyword>
<feature type="chain" id="PRO_0000441734" description="Actiflagelin" evidence="2">
    <location>
        <begin position="1"/>
        <end position="63"/>
    </location>
</feature>
<feature type="modified residue" description="Proline amide" evidence="5">
    <location>
        <position position="63"/>
    </location>
</feature>
<feature type="disulfide bond" evidence="1">
    <location>
        <begin position="3"/>
        <end position="24"/>
    </location>
</feature>
<feature type="disulfide bond" evidence="1">
    <location>
        <begin position="6"/>
        <end position="11"/>
    </location>
</feature>
<feature type="disulfide bond" evidence="1">
    <location>
        <begin position="17"/>
        <end position="39"/>
    </location>
</feature>
<feature type="disulfide bond" evidence="1">
    <location>
        <begin position="43"/>
        <end position="55"/>
    </location>
</feature>
<feature type="disulfide bond" evidence="1">
    <location>
        <begin position="56"/>
        <end position="61"/>
    </location>
</feature>
<proteinExistence type="evidence at protein level"/>
<comment type="function">
    <text evidence="2">Unknown. In vitro, this toxin activates sperm motility when tested on OF1 male mice.</text>
</comment>
<comment type="subcellular location">
    <subcellularLocation>
        <location evidence="2">Secreted</location>
    </subcellularLocation>
</comment>
<comment type="tissue specificity">
    <text evidence="5">Expressed by the venom gland.</text>
</comment>
<comment type="PTM">
    <text evidence="2">Contains 5 disulfide bonds.</text>
</comment>
<comment type="mass spectrometry"/>
<comment type="mass spectrometry"/>
<comment type="similarity">
    <text evidence="4">Belongs to the three-finger toxin family. Ancestral subfamily. Orphan group XIX sub-subfamily.</text>
</comment>
<reference key="1">
    <citation type="journal article" date="2018" name="J. Venom. Anim. Toxins Incl. Trop. Dis.">
        <title>Actiflagelin, a new sperm activator isolated from Walterinnesia aegyptia venom using phenotypic screening.</title>
        <authorList>
            <person name="Abd El-Aziz T.M."/>
            <person name="Al Khoury S."/>
            <person name="Jaquillard L."/>
            <person name="Triquigneaux M."/>
            <person name="Martinez G."/>
            <person name="Bourgoin-Voillard S."/>
            <person name="Seve M."/>
            <person name="Arnoult C."/>
            <person name="Beroud R."/>
            <person name="De Waard M."/>
        </authorList>
    </citation>
    <scope>PROTEIN SEQUENCE</scope>
    <scope>FUNCTION</scope>
    <scope>SUBCELLULAR LOCATION</scope>
    <scope>MASS SPECTROMETRY</scope>
    <scope>PRESENCE OF DISULFIDE BONDS</scope>
    <scope>PROBABLE AMIDATION AT PRO-63</scope>
    <source>
        <tissue>Venom</tissue>
    </source>
</reference>
<protein>
    <recommendedName>
        <fullName evidence="3">Actiflagelin</fullName>
    </recommendedName>
</protein>
<dbReference type="SMR" id="C0HKZ8"/>
<dbReference type="GO" id="GO:0005576">
    <property type="term" value="C:extracellular region"/>
    <property type="evidence" value="ECO:0000314"/>
    <property type="project" value="UniProtKB"/>
</dbReference>
<dbReference type="GO" id="GO:0090729">
    <property type="term" value="F:toxin activity"/>
    <property type="evidence" value="ECO:0007669"/>
    <property type="project" value="UniProtKB-KW"/>
</dbReference>
<dbReference type="Gene3D" id="2.10.60.10">
    <property type="entry name" value="CD59"/>
    <property type="match status" value="1"/>
</dbReference>
<dbReference type="InterPro" id="IPR045860">
    <property type="entry name" value="Snake_toxin-like_sf"/>
</dbReference>
<dbReference type="InterPro" id="IPR035076">
    <property type="entry name" value="Toxin/TOLIP"/>
</dbReference>
<dbReference type="Pfam" id="PF00087">
    <property type="entry name" value="Toxin_TOLIP"/>
    <property type="match status" value="1"/>
</dbReference>
<dbReference type="SUPFAM" id="SSF57302">
    <property type="entry name" value="Snake toxin-like"/>
    <property type="match status" value="1"/>
</dbReference>